<feature type="chain" id="PRO_0000237795" description="2-C-methyl-D-erythritol 4-phosphate cytidylyltransferase">
    <location>
        <begin position="1"/>
        <end position="253"/>
    </location>
</feature>
<feature type="site" description="Transition state stabilizer" evidence="1">
    <location>
        <position position="28"/>
    </location>
</feature>
<feature type="site" description="Transition state stabilizer" evidence="1">
    <location>
        <position position="35"/>
    </location>
</feature>
<feature type="site" description="Positions MEP for the nucleophilic attack" evidence="1">
    <location>
        <position position="174"/>
    </location>
</feature>
<feature type="site" description="Positions MEP for the nucleophilic attack" evidence="1">
    <location>
        <position position="230"/>
    </location>
</feature>
<comment type="function">
    <text evidence="1">Catalyzes the formation of 4-diphosphocytidyl-2-C-methyl-D-erythritol from CTP and 2-C-methyl-D-erythritol 4-phosphate (MEP).</text>
</comment>
<comment type="catalytic activity">
    <reaction evidence="1">
        <text>2-C-methyl-D-erythritol 4-phosphate + CTP + H(+) = 4-CDP-2-C-methyl-D-erythritol + diphosphate</text>
        <dbReference type="Rhea" id="RHEA:13429"/>
        <dbReference type="ChEBI" id="CHEBI:15378"/>
        <dbReference type="ChEBI" id="CHEBI:33019"/>
        <dbReference type="ChEBI" id="CHEBI:37563"/>
        <dbReference type="ChEBI" id="CHEBI:57823"/>
        <dbReference type="ChEBI" id="CHEBI:58262"/>
        <dbReference type="EC" id="2.7.7.60"/>
    </reaction>
</comment>
<comment type="pathway">
    <text evidence="1">Isoprenoid biosynthesis; isopentenyl diphosphate biosynthesis via DXP pathway; isopentenyl diphosphate from 1-deoxy-D-xylulose 5-phosphate: step 2/6.</text>
</comment>
<comment type="similarity">
    <text evidence="1">Belongs to the IspD/TarI cytidylyltransferase family. IspD subfamily.</text>
</comment>
<protein>
    <recommendedName>
        <fullName evidence="1">2-C-methyl-D-erythritol 4-phosphate cytidylyltransferase</fullName>
        <ecNumber evidence="1">2.7.7.60</ecNumber>
    </recommendedName>
    <alternativeName>
        <fullName evidence="1">4-diphosphocytidyl-2C-methyl-D-erythritol synthase</fullName>
    </alternativeName>
    <alternativeName>
        <fullName evidence="1">MEP cytidylyltransferase</fullName>
        <shortName evidence="1">MCT</shortName>
    </alternativeName>
</protein>
<dbReference type="EC" id="2.7.7.60" evidence="1"/>
<dbReference type="EMBL" id="AE017340">
    <property type="protein sequence ID" value="AAV81593.1"/>
    <property type="molecule type" value="Genomic_DNA"/>
</dbReference>
<dbReference type="RefSeq" id="WP_011234004.1">
    <property type="nucleotide sequence ID" value="NC_006512.1"/>
</dbReference>
<dbReference type="SMR" id="Q5QUC3"/>
<dbReference type="STRING" id="283942.IL0752"/>
<dbReference type="GeneID" id="41335906"/>
<dbReference type="KEGG" id="ilo:IL0752"/>
<dbReference type="eggNOG" id="COG1211">
    <property type="taxonomic scope" value="Bacteria"/>
</dbReference>
<dbReference type="HOGENOM" id="CLU_061281_3_1_6"/>
<dbReference type="OrthoDB" id="9806837at2"/>
<dbReference type="UniPathway" id="UPA00056">
    <property type="reaction ID" value="UER00093"/>
</dbReference>
<dbReference type="Proteomes" id="UP000001171">
    <property type="component" value="Chromosome"/>
</dbReference>
<dbReference type="GO" id="GO:0050518">
    <property type="term" value="F:2-C-methyl-D-erythritol 4-phosphate cytidylyltransferase activity"/>
    <property type="evidence" value="ECO:0007669"/>
    <property type="project" value="UniProtKB-UniRule"/>
</dbReference>
<dbReference type="GO" id="GO:0019288">
    <property type="term" value="P:isopentenyl diphosphate biosynthetic process, methylerythritol 4-phosphate pathway"/>
    <property type="evidence" value="ECO:0007669"/>
    <property type="project" value="UniProtKB-UniRule"/>
</dbReference>
<dbReference type="CDD" id="cd02516">
    <property type="entry name" value="CDP-ME_synthetase"/>
    <property type="match status" value="1"/>
</dbReference>
<dbReference type="FunFam" id="3.90.550.10:FF:000003">
    <property type="entry name" value="2-C-methyl-D-erythritol 4-phosphate cytidylyltransferase"/>
    <property type="match status" value="1"/>
</dbReference>
<dbReference type="Gene3D" id="3.90.550.10">
    <property type="entry name" value="Spore Coat Polysaccharide Biosynthesis Protein SpsA, Chain A"/>
    <property type="match status" value="1"/>
</dbReference>
<dbReference type="HAMAP" id="MF_00108">
    <property type="entry name" value="IspD"/>
    <property type="match status" value="1"/>
</dbReference>
<dbReference type="InterPro" id="IPR001228">
    <property type="entry name" value="IspD"/>
</dbReference>
<dbReference type="InterPro" id="IPR034683">
    <property type="entry name" value="IspD/TarI"/>
</dbReference>
<dbReference type="InterPro" id="IPR050088">
    <property type="entry name" value="IspD/TarI_cytidylyltransf_bact"/>
</dbReference>
<dbReference type="InterPro" id="IPR018294">
    <property type="entry name" value="ISPD_synthase_CS"/>
</dbReference>
<dbReference type="InterPro" id="IPR029044">
    <property type="entry name" value="Nucleotide-diphossugar_trans"/>
</dbReference>
<dbReference type="NCBIfam" id="TIGR00453">
    <property type="entry name" value="ispD"/>
    <property type="match status" value="1"/>
</dbReference>
<dbReference type="PANTHER" id="PTHR32125">
    <property type="entry name" value="2-C-METHYL-D-ERYTHRITOL 4-PHOSPHATE CYTIDYLYLTRANSFERASE, CHLOROPLASTIC"/>
    <property type="match status" value="1"/>
</dbReference>
<dbReference type="PANTHER" id="PTHR32125:SF4">
    <property type="entry name" value="2-C-METHYL-D-ERYTHRITOL 4-PHOSPHATE CYTIDYLYLTRANSFERASE, CHLOROPLASTIC"/>
    <property type="match status" value="1"/>
</dbReference>
<dbReference type="Pfam" id="PF01128">
    <property type="entry name" value="IspD"/>
    <property type="match status" value="1"/>
</dbReference>
<dbReference type="SUPFAM" id="SSF53448">
    <property type="entry name" value="Nucleotide-diphospho-sugar transferases"/>
    <property type="match status" value="1"/>
</dbReference>
<dbReference type="PROSITE" id="PS01295">
    <property type="entry name" value="ISPD"/>
    <property type="match status" value="1"/>
</dbReference>
<gene>
    <name evidence="1" type="primary">ispD</name>
    <name type="ordered locus">IL0752</name>
</gene>
<keyword id="KW-0414">Isoprene biosynthesis</keyword>
<keyword id="KW-0548">Nucleotidyltransferase</keyword>
<keyword id="KW-1185">Reference proteome</keyword>
<keyword id="KW-0808">Transferase</keyword>
<proteinExistence type="inferred from homology"/>
<accession>Q5QUC3</accession>
<organism>
    <name type="scientific">Idiomarina loihiensis (strain ATCC BAA-735 / DSM 15497 / L2-TR)</name>
    <dbReference type="NCBI Taxonomy" id="283942"/>
    <lineage>
        <taxon>Bacteria</taxon>
        <taxon>Pseudomonadati</taxon>
        <taxon>Pseudomonadota</taxon>
        <taxon>Gammaproteobacteria</taxon>
        <taxon>Alteromonadales</taxon>
        <taxon>Idiomarinaceae</taxon>
        <taxon>Idiomarina</taxon>
    </lineage>
</organism>
<reference key="1">
    <citation type="journal article" date="2004" name="Proc. Natl. Acad. Sci. U.S.A.">
        <title>Genome sequence of the deep-sea gamma-proteobacterium Idiomarina loihiensis reveals amino acid fermentation as a source of carbon and energy.</title>
        <authorList>
            <person name="Hou S."/>
            <person name="Saw J.H."/>
            <person name="Lee K.S."/>
            <person name="Freitas T.A."/>
            <person name="Belisle C."/>
            <person name="Kawarabayasi Y."/>
            <person name="Donachie S.P."/>
            <person name="Pikina A."/>
            <person name="Galperin M.Y."/>
            <person name="Koonin E.V."/>
            <person name="Makarova K.S."/>
            <person name="Omelchenko M.V."/>
            <person name="Sorokin A."/>
            <person name="Wolf Y.I."/>
            <person name="Li Q.X."/>
            <person name="Keum Y.S."/>
            <person name="Campbell S."/>
            <person name="Denery J."/>
            <person name="Aizawa S."/>
            <person name="Shibata S."/>
            <person name="Malahoff A."/>
            <person name="Alam M."/>
        </authorList>
    </citation>
    <scope>NUCLEOTIDE SEQUENCE [LARGE SCALE GENOMIC DNA]</scope>
    <source>
        <strain>ATCC BAA-735 / DSM 15497 / L2-TR</strain>
    </source>
</reference>
<sequence>MKSESESHAQSQIDSLMAVIPAAGSGSRMQANIPKQFLMVANRTLLEYSIEAVLKDARVEQVFVAVSDSNAEYLIELKKSLPTKVHFVTGGNSRAESVLAGVKVAVSQGATHVLVHDAARPCLPKKALTAVINTGLKDPQGAILAIPVRDSLKRAVISVNDETGVTHIESSVDREALWQAQTPQVFNAERLQQAIEHMGALNPQLTDEASAMQWCGFQPALIPGSIRNLKVTHPEDFECVRDWLLADNNDHKN</sequence>
<name>ISPD_IDILO</name>
<evidence type="ECO:0000255" key="1">
    <source>
        <dbReference type="HAMAP-Rule" id="MF_00108"/>
    </source>
</evidence>